<organism>
    <name type="scientific">Influenza A virus (strain A/Teal/China/2978.1/2002 H5N1 genotype W)</name>
    <dbReference type="NCBI Taxonomy" id="284215"/>
    <lineage>
        <taxon>Viruses</taxon>
        <taxon>Riboviria</taxon>
        <taxon>Orthornavirae</taxon>
        <taxon>Negarnaviricota</taxon>
        <taxon>Polyploviricotina</taxon>
        <taxon>Insthoviricetes</taxon>
        <taxon>Articulavirales</taxon>
        <taxon>Orthomyxoviridae</taxon>
        <taxon>Alphainfluenzavirus</taxon>
        <taxon>Alphainfluenzavirus influenzae</taxon>
        <taxon>Influenza A virus</taxon>
    </lineage>
</organism>
<proteinExistence type="inferred from homology"/>
<organismHost>
    <name type="scientific">Aves</name>
    <dbReference type="NCBI Taxonomy" id="8782"/>
</organismHost>
<organismHost>
    <name type="scientific">Felis catus</name>
    <name type="common">Cat</name>
    <name type="synonym">Felis silvestris catus</name>
    <dbReference type="NCBI Taxonomy" id="9685"/>
</organismHost>
<organismHost>
    <name type="scientific">Homo sapiens</name>
    <name type="common">Human</name>
    <dbReference type="NCBI Taxonomy" id="9606"/>
</organismHost>
<organismHost>
    <name type="scientific">Panthera pardus</name>
    <name type="common">Leopard</name>
    <name type="synonym">Felis pardus</name>
    <dbReference type="NCBI Taxonomy" id="9691"/>
</organismHost>
<organismHost>
    <name type="scientific">Panthera tigris</name>
    <name type="common">Tiger</name>
    <dbReference type="NCBI Taxonomy" id="9694"/>
</organismHost>
<organismHost>
    <name type="scientific">Sus scrofa</name>
    <name type="common">Pig</name>
    <dbReference type="NCBI Taxonomy" id="9823"/>
</organismHost>
<dbReference type="EC" id="3.2.1.18" evidence="2"/>
<dbReference type="EMBL" id="AY651473">
    <property type="protein sequence ID" value="AAT73355.2"/>
    <property type="molecule type" value="Genomic_RNA"/>
</dbReference>
<dbReference type="SMR" id="Q6DPI6"/>
<dbReference type="CAZy" id="GH34">
    <property type="family name" value="Glycoside Hydrolase Family 34"/>
</dbReference>
<dbReference type="GlyCosmos" id="Q6DPI6">
    <property type="glycosylation" value="7 sites, No reported glycans"/>
</dbReference>
<dbReference type="GO" id="GO:0020002">
    <property type="term" value="C:host cell plasma membrane"/>
    <property type="evidence" value="ECO:0007669"/>
    <property type="project" value="UniProtKB-SubCell"/>
</dbReference>
<dbReference type="GO" id="GO:0016020">
    <property type="term" value="C:membrane"/>
    <property type="evidence" value="ECO:0007669"/>
    <property type="project" value="UniProtKB-KW"/>
</dbReference>
<dbReference type="GO" id="GO:0055036">
    <property type="term" value="C:virion membrane"/>
    <property type="evidence" value="ECO:0007669"/>
    <property type="project" value="UniProtKB-SubCell"/>
</dbReference>
<dbReference type="GO" id="GO:0004308">
    <property type="term" value="F:exo-alpha-sialidase activity"/>
    <property type="evidence" value="ECO:0007669"/>
    <property type="project" value="UniProtKB-EC"/>
</dbReference>
<dbReference type="GO" id="GO:0046872">
    <property type="term" value="F:metal ion binding"/>
    <property type="evidence" value="ECO:0007669"/>
    <property type="project" value="UniProtKB-KW"/>
</dbReference>
<dbReference type="GO" id="GO:0005975">
    <property type="term" value="P:carbohydrate metabolic process"/>
    <property type="evidence" value="ECO:0007669"/>
    <property type="project" value="InterPro"/>
</dbReference>
<dbReference type="GO" id="GO:0046761">
    <property type="term" value="P:viral budding from plasma membrane"/>
    <property type="evidence" value="ECO:0007669"/>
    <property type="project" value="InterPro"/>
</dbReference>
<dbReference type="CDD" id="cd15483">
    <property type="entry name" value="Influenza_NA"/>
    <property type="match status" value="1"/>
</dbReference>
<dbReference type="FunFam" id="2.120.10.10:FF:000001">
    <property type="entry name" value="Neuraminidase"/>
    <property type="match status" value="1"/>
</dbReference>
<dbReference type="Gene3D" id="2.120.10.10">
    <property type="match status" value="1"/>
</dbReference>
<dbReference type="HAMAP" id="MF_04071">
    <property type="entry name" value="INFV_NRAM"/>
    <property type="match status" value="1"/>
</dbReference>
<dbReference type="InterPro" id="IPR001860">
    <property type="entry name" value="Glyco_hydro_34"/>
</dbReference>
<dbReference type="InterPro" id="IPR033654">
    <property type="entry name" value="Sialidase_Influenza_A/B"/>
</dbReference>
<dbReference type="InterPro" id="IPR036278">
    <property type="entry name" value="Sialidase_sf"/>
</dbReference>
<dbReference type="Pfam" id="PF00064">
    <property type="entry name" value="Neur"/>
    <property type="match status" value="1"/>
</dbReference>
<dbReference type="SUPFAM" id="SSF50939">
    <property type="entry name" value="Sialidases"/>
    <property type="match status" value="1"/>
</dbReference>
<feature type="chain" id="PRO_0000310940" description="Neuraminidase">
    <location>
        <begin position="1" status="less than"/>
        <end position="454"/>
    </location>
</feature>
<feature type="transmembrane region" description="Helical" evidence="1">
    <location>
        <begin position="1" status="less than"/>
        <end position="13"/>
    </location>
</feature>
<feature type="topological domain" description="Virion surface" evidence="1">
    <location>
        <begin position="14"/>
        <end position="454"/>
    </location>
</feature>
<feature type="region of interest" description="Hypervariable stalk region" evidence="2">
    <location>
        <begin position="21"/>
        <end position="75"/>
    </location>
</feature>
<feature type="region of interest" description="Head of neuraminidase" evidence="2">
    <location>
        <begin position="76"/>
        <end position="454"/>
    </location>
</feature>
<feature type="active site" description="Proton donor/acceptor" evidence="2">
    <location>
        <position position="136"/>
    </location>
</feature>
<feature type="active site" description="Nucleophile" evidence="2">
    <location>
        <position position="387"/>
    </location>
</feature>
<feature type="binding site" evidence="2">
    <location>
        <position position="103"/>
    </location>
    <ligand>
        <name>substrate</name>
    </ligand>
</feature>
<feature type="binding site" evidence="2">
    <location>
        <position position="137"/>
    </location>
    <ligand>
        <name>substrate</name>
    </ligand>
</feature>
<feature type="binding site" evidence="2">
    <location>
        <begin position="262"/>
        <end position="263"/>
    </location>
    <ligand>
        <name>substrate</name>
    </ligand>
</feature>
<feature type="binding site" evidence="2">
    <location>
        <position position="278"/>
    </location>
    <ligand>
        <name>substrate</name>
    </ligand>
</feature>
<feature type="binding site" evidence="2">
    <location>
        <position position="279"/>
    </location>
    <ligand>
        <name>Ca(2+)</name>
        <dbReference type="ChEBI" id="CHEBI:29108"/>
    </ligand>
</feature>
<feature type="binding site" evidence="2">
    <location>
        <position position="283"/>
    </location>
    <ligand>
        <name>Ca(2+)</name>
        <dbReference type="ChEBI" id="CHEBI:29108"/>
    </ligand>
</feature>
<feature type="binding site" evidence="2">
    <location>
        <position position="309"/>
    </location>
    <ligand>
        <name>Ca(2+)</name>
        <dbReference type="ChEBI" id="CHEBI:29108"/>
    </ligand>
</feature>
<feature type="binding site" evidence="2">
    <location>
        <position position="353"/>
    </location>
    <ligand>
        <name>substrate</name>
    </ligand>
</feature>
<feature type="glycosylation site" description="N-linked (GlcNAc...) asparagine; by host" evidence="2">
    <location>
        <position position="43"/>
    </location>
</feature>
<feature type="glycosylation site" description="N-linked (GlcNAc...) asparagine; by host" evidence="2">
    <location>
        <position position="48"/>
    </location>
</feature>
<feature type="glycosylation site" description="N-linked (GlcNAc...) asparagine; by host" evidence="2">
    <location>
        <position position="53"/>
    </location>
</feature>
<feature type="glycosylation site" description="N-linked (GlcNAc...) asparagine; by host" evidence="2">
    <location>
        <position position="73"/>
    </location>
</feature>
<feature type="glycosylation site" description="N-linked (GlcNAc...) asparagine; by host" evidence="2">
    <location>
        <position position="131"/>
    </location>
</feature>
<feature type="glycosylation site" description="N-linked (GlcNAc...) asparagine; by host" evidence="2">
    <location>
        <position position="220"/>
    </location>
</feature>
<feature type="glycosylation site" description="N-linked (GlcNAc...) asparagine; by host" evidence="2">
    <location>
        <position position="371"/>
    </location>
</feature>
<feature type="disulfide bond" evidence="2">
    <location>
        <begin position="77"/>
        <end position="402"/>
    </location>
</feature>
<feature type="disulfide bond" evidence="2">
    <location>
        <begin position="109"/>
        <end position="114"/>
    </location>
</feature>
<feature type="disulfide bond" evidence="2">
    <location>
        <begin position="169"/>
        <end position="216"/>
    </location>
</feature>
<feature type="disulfide bond" evidence="2">
    <location>
        <begin position="218"/>
        <end position="223"/>
    </location>
</feature>
<feature type="disulfide bond" evidence="2">
    <location>
        <begin position="264"/>
        <end position="277"/>
    </location>
</feature>
<feature type="disulfide bond" evidence="2">
    <location>
        <begin position="266"/>
        <end position="275"/>
    </location>
</feature>
<feature type="disulfide bond" evidence="2">
    <location>
        <begin position="303"/>
        <end position="320"/>
    </location>
</feature>
<feature type="disulfide bond" evidence="2">
    <location>
        <begin position="406"/>
        <end position="431"/>
    </location>
</feature>
<feature type="non-terminal residue">
    <location>
        <position position="1"/>
    </location>
</feature>
<protein>
    <recommendedName>
        <fullName evidence="2">Neuraminidase</fullName>
        <ecNumber evidence="2">3.2.1.18</ecNumber>
    </recommendedName>
</protein>
<accession>Q6DPI6</accession>
<gene>
    <name evidence="2" type="primary">NA</name>
</gene>
<name>NRAM_I02A7</name>
<reference key="1">
    <citation type="journal article" date="2004" name="Nature">
        <title>Genesis of a highly pathogenic and potentially pandemic H5N1 influenza virus in eastern Asia.</title>
        <authorList>
            <person name="Li K.S."/>
            <person name="Guan Y."/>
            <person name="Wang J."/>
            <person name="Smith G.J.D."/>
            <person name="Xu K.M."/>
            <person name="Duan L."/>
            <person name="Rahardjo A.P."/>
            <person name="Puthavathana P."/>
            <person name="Buranathai C."/>
            <person name="Nguyen T.D."/>
            <person name="Estoepangestie A.T.S."/>
            <person name="Chaisingh A."/>
            <person name="Auewarakul P."/>
            <person name="Long H.T."/>
            <person name="Hanh N.T.H."/>
            <person name="Webby R.J."/>
            <person name="Poon L.L.M."/>
            <person name="Chen H."/>
            <person name="Shortridge K.F."/>
            <person name="Yuen K.Y."/>
            <person name="Webster R.G."/>
            <person name="Peiris J.S.M."/>
        </authorList>
    </citation>
    <scope>NUCLEOTIDE SEQUENCE [GENOMIC RNA]</scope>
</reference>
<reference key="2">
    <citation type="submission" date="2008-03" db="EMBL/GenBank/DDBJ databases">
        <authorList>
            <person name="Li K.S."/>
            <person name="Guan Y."/>
            <person name="Wang J."/>
            <person name="Smith G.J.D."/>
            <person name="Xu K.M."/>
            <person name="Duan L."/>
            <person name="Rahardjo A.P."/>
            <person name="Puthavathana P."/>
            <person name="Buranathai C."/>
            <person name="Nguyen T.D."/>
            <person name="Estoepangestie A.T.S."/>
            <person name="Chaisingh A."/>
            <person name="Auewarakul P."/>
            <person name="Long H.T."/>
            <person name="Hanh N.T.H."/>
            <person name="Lim W."/>
            <person name="Webby R.J."/>
            <person name="Poon L.L.M."/>
            <person name="Chen H."/>
            <person name="Shortridge K.F."/>
            <person name="Yuen K.Y."/>
            <person name="Webster R.G."/>
            <person name="Peiris J.S.M."/>
        </authorList>
    </citation>
    <scope>SEQUENCE REVISION</scope>
</reference>
<keyword id="KW-0106">Calcium</keyword>
<keyword id="KW-1015">Disulfide bond</keyword>
<keyword id="KW-0325">Glycoprotein</keyword>
<keyword id="KW-0326">Glycosidase</keyword>
<keyword id="KW-1032">Host cell membrane</keyword>
<keyword id="KW-1043">Host membrane</keyword>
<keyword id="KW-0378">Hydrolase</keyword>
<keyword id="KW-0472">Membrane</keyword>
<keyword id="KW-0479">Metal-binding</keyword>
<keyword id="KW-0735">Signal-anchor</keyword>
<keyword id="KW-0812">Transmembrane</keyword>
<keyword id="KW-1133">Transmembrane helix</keyword>
<keyword id="KW-0946">Virion</keyword>
<comment type="function">
    <text evidence="2">Catalyzes the removal of terminal sialic acid residues from viral and cellular glycoconjugates. Cleaves off the terminal sialic acids on the glycosylated HA during virus budding to facilitate virus release. Additionally helps virus spread through the circulation by further removing sialic acids from the cell surface. These cleavages prevent self-aggregation and ensure the efficient spread of the progeny virus from cell to cell. Otherwise, infection would be limited to one round of replication. Described as a receptor-destroying enzyme because it cleaves a terminal sialic acid from the cellular receptors. May facilitate viral invasion of the upper airways by cleaving the sialic acid moieties on the mucin of the airway epithelial cells. Likely to plays a role in the budding process through its association with lipid rafts during intracellular transport. May additionally display a raft-association independent effect on budding. Plays a role in the determination of host range restriction on replication and virulence. Sialidase activity in late endosome/lysosome traffic seems to enhance virus replication.</text>
</comment>
<comment type="catalytic activity">
    <reaction evidence="2">
        <text>Hydrolysis of alpha-(2-&gt;3)-, alpha-(2-&gt;6)-, alpha-(2-&gt;8)- glycosidic linkages of terminal sialic acid residues in oligosaccharides, glycoproteins, glycolipids, colominic acid and synthetic substrates.</text>
        <dbReference type="EC" id="3.2.1.18"/>
    </reaction>
</comment>
<comment type="cofactor">
    <cofactor evidence="2">
        <name>Ca(2+)</name>
        <dbReference type="ChEBI" id="CHEBI:29108"/>
    </cofactor>
</comment>
<comment type="activity regulation">
    <text evidence="2">Inhibited by the neuraminidase inhibitors zanamivir (Relenza) and oseltamivir (Tamiflu). These drugs interfere with the release of progeny virus from infected cells and are effective against all influenza strains. Resistance to neuraminidase inhibitors is quite rare.</text>
</comment>
<comment type="subunit">
    <text evidence="2">Homotetramer.</text>
</comment>
<comment type="subcellular location">
    <subcellularLocation>
        <location evidence="2">Virion membrane</location>
    </subcellularLocation>
    <subcellularLocation>
        <location evidence="2">Host apical cell membrane</location>
        <topology evidence="2">Single-pass type II membrane protein</topology>
    </subcellularLocation>
    <text evidence="2">Preferentially accumulates at the apical plasma membrane in infected polarized epithelial cells, which is the virus assembly site. Uses lipid rafts for cell surface transport and apical sorting. In the virion, forms a mushroom-shaped spike on the surface of the membrane.</text>
</comment>
<comment type="domain">
    <text evidence="2">Intact N-terminus is essential for virion morphogenesis. Possesses two apical sorting signals, one in the ectodomain, which is likely to be a glycan, and the other in the transmembrane domain. The transmembrane domain also plays a role in lipid raft association.</text>
</comment>
<comment type="PTM">
    <text evidence="2">N-glycosylated.</text>
</comment>
<comment type="miscellaneous">
    <text>The influenza A genome consist of 8 RNA segments. Genetic variation of hemagglutinin and/or neuraminidase genes results in the emergence of new influenza strains. The mechanism of variation can be the result of point mutations or the result of genetic reassortment between segments of two different strains.</text>
</comment>
<comment type="similarity">
    <text evidence="2">Belongs to the glycosyl hydrolase 34 family.</text>
</comment>
<evidence type="ECO:0000255" key="1"/>
<evidence type="ECO:0000255" key="2">
    <source>
        <dbReference type="HAMAP-Rule" id="MF_04071"/>
    </source>
</evidence>
<sequence>VIGIVSLMLQIGNIISIWVSHSIQTGNQHQAEPCIQSIITYENNTWVNQTYVNISNTNFLTEKTVASVTLAGNSSLCPISGWAVYSKDNGIRIGSKGDVFVIREPFISCSHLECRTFFLTQGALLNDKHSNGTVKDRSPHRTLMSCPVGEAPSPYNSRFESVAWSASACHDGTNWLTIGISGPDNGAVAVLKYNGIITDTIKSWRNNILRTQESECACVNGSCFTVMTDGPSNGQASYKIFRIEKGKVVKSVELNAPNYHYEECSCYPDAGEITCVCRDNWHGSNRPWVSFNQNLEYQIGYICSGIFGDNPRPNDGTGSCGPVSSNGAYGIKGFSYKYGNGVWIGRTKSTNSRSGFEMIWDPNGWTGTDSNFSVKQDIVAITDWSGYSGSFVQHPELTGLDCIRPCFWVELIRGRPKESTIWTSGSSISFCGVNSDTVGWSWPDGAELPFTIDK</sequence>